<gene>
    <name type="primary">ORF1</name>
</gene>
<organism>
    <name type="scientific">Mink astrovirus 1</name>
    <name type="common">MAstV-1</name>
    <dbReference type="NCBI Taxonomy" id="1239574"/>
    <lineage>
        <taxon>Viruses</taxon>
        <taxon>Riboviria</taxon>
        <taxon>Orthornavirae</taxon>
        <taxon>Pisuviricota</taxon>
        <taxon>Stelpaviricetes</taxon>
        <taxon>Stellavirales</taxon>
        <taxon>Astroviridae</taxon>
        <taxon>Mamastrovirus</taxon>
    </lineage>
</organism>
<sequence length="874" mass="97914">MANNTTSALHPRGSGQRCVYDTVLRFGDPDARRRGFQLDEVSHNKLCDIFDSGPLHFAFGDLKVMKVAGGVVTPHKTVVKTVYVSGVQEGNDYVTFAFTPGPNEWREVDPRIDKRTALVGVLVQEHKKLDSDLKESRRELSQLKLEHSLLRHDYERLVREKPGPAMRTFKFSAVIFYAFFLGFLLMSAVKGEVYGRCLDSELNLNGNPEVCLHWEEVKSFSLQVALADFWNMTLDYYATVAPQSPLMDLALGYFPYFANWHMAAFLVGTAHVVAAERPLYMLVTLVLATLSRFQLVALAAVPMLDMPSSIGLWVTMVLFAIDQAFAILASVLISVLLLILCLAMNDVDYGALLRGCVTLVSATVFSHLVSFLHAPGWFTIIAILIYRIPKVLSYVSAERVDIKGPDGKIKETQNANPSWITKMSGLKNFFQRAFRQKVRTGVNPTTRIIPNSLVVIDAKDGRGTGFRVRNYLVTAGHVVGADTTVRVRWADVTSFAHVVYRVPNKDIVLLTLPAEYNSLHSYKLAKEVVDGTVVVVSNGDGGALSVGISEGVIVGESMTYAINTADGMSGSPLTTTDGRLIGVHQQNTGFTGGAVIFRDTDFPQPKKPQREADLEAKVAELEKALAAYTQSATGEDIVGLVRVAIQREMEVLRKELSNEFGQAKGKTKHKRRIMAAARSGGKRKPGKVWTEEEYKKLLEEGFTRDQLREMAEAAREADDDFDDYEEEKNEVDYPVWSDHDSDEEIDRDWFGQNLPTWSSAWSDFEPELDPDVTKTLPCHLEDKFSLKHYIITEADLKHFGQEMKEYMDHLDAVIKTHTEKGKWCPNTNTEEILKDLNAMWFKLNHTMWKNGVAPFMQRKKQKPKNGKRAPKGAQ</sequence>
<proteinExistence type="inferred from homology"/>
<protein>
    <recommendedName>
        <fullName>Non-structural polyprotein 1A</fullName>
    </recommendedName>
    <component>
        <recommendedName>
            <fullName>Protein p19</fullName>
        </recommendedName>
    </component>
    <component>
        <recommendedName>
            <fullName>Transmembrane protein 1A</fullName>
        </recommendedName>
    </component>
    <component>
        <recommendedName>
            <fullName>Serine protease p27</fullName>
            <shortName>p27</shortName>
            <ecNumber evidence="2">3.4.21.-</ecNumber>
        </recommendedName>
    </component>
    <component>
        <recommendedName>
            <fullName>Viral genome-linked protein</fullName>
        </recommendedName>
        <alternativeName>
            <fullName>VPg</fullName>
        </alternativeName>
    </component>
    <component>
        <recommendedName>
            <fullName>Protein p20'</fullName>
        </recommendedName>
    </component>
</protein>
<comment type="function">
    <molecule>Serine protease p27</molecule>
    <text evidence="2">Responsible for the cleavage of the polyprotein into functional products.</text>
</comment>
<comment type="function">
    <molecule>Viral genome-linked protein</molecule>
    <text evidence="3">Protein covalently attached to the 5' extremity of the genomic and subgenomic RNAs (By similarity). It may serve as a primer for the replicase (By similarity).</text>
</comment>
<comment type="catalytic activity">
    <reaction>
        <text>RNA(n) + a ribonucleoside 5'-triphosphate = RNA(n+1) + diphosphate</text>
        <dbReference type="Rhea" id="RHEA:21248"/>
        <dbReference type="Rhea" id="RHEA-COMP:14527"/>
        <dbReference type="Rhea" id="RHEA-COMP:17342"/>
        <dbReference type="ChEBI" id="CHEBI:33019"/>
        <dbReference type="ChEBI" id="CHEBI:61557"/>
        <dbReference type="ChEBI" id="CHEBI:140395"/>
    </reaction>
</comment>
<comment type="subunit">
    <molecule>Serine protease p27</molecule>
    <text evidence="2">Monomer.</text>
</comment>
<comment type="subcellular location">
    <molecule>Transmembrane protein 1A</molecule>
    <subcellularLocation>
        <location evidence="6">Host membrane</location>
        <topology evidence="6">Multi-pass membrane protein</topology>
    </subcellularLocation>
</comment>
<comment type="alternative products">
    <event type="ribosomal frameshifting"/>
    <isoform>
        <id>Q80KJ8-1</id>
        <name>nsp1a</name>
        <sequence type="displayed"/>
    </isoform>
    <isoform>
        <id>Q80KJ7-1</id>
        <name>nsp1ab</name>
        <sequence type="external"/>
    </isoform>
</comment>
<comment type="PTM">
    <text evidence="2">Cleaved by the viral and host proteases (By similarity). The protease is probably autocatalytically cleaved (By similarity).</text>
</comment>
<comment type="similarity">
    <text evidence="6">Belongs to the astroviridae polyprotein 1A family.</text>
</comment>
<evidence type="ECO:0000250" key="1"/>
<evidence type="ECO:0000250" key="2">
    <source>
        <dbReference type="UniProtKB" id="P0C6K4"/>
    </source>
</evidence>
<evidence type="ECO:0000250" key="3">
    <source>
        <dbReference type="UniProtKB" id="Q3ZN07"/>
    </source>
</evidence>
<evidence type="ECO:0000255" key="4"/>
<evidence type="ECO:0000256" key="5">
    <source>
        <dbReference type="SAM" id="MobiDB-lite"/>
    </source>
</evidence>
<evidence type="ECO:0000305" key="6"/>
<keyword id="KW-0191">Covalent protein-RNA linkage</keyword>
<keyword id="KW-1043">Host membrane</keyword>
<keyword id="KW-0378">Hydrolase</keyword>
<keyword id="KW-0472">Membrane</keyword>
<keyword id="KW-0597">Phosphoprotein</keyword>
<keyword id="KW-0645">Protease</keyword>
<keyword id="KW-0688">Ribosomal frameshifting</keyword>
<keyword id="KW-0720">Serine protease</keyword>
<keyword id="KW-0812">Transmembrane</keyword>
<keyword id="KW-1133">Transmembrane helix</keyword>
<keyword id="KW-0693">Viral RNA replication</keyword>
<organismHost>
    <name type="scientific">Neovison vison</name>
    <name type="common">American mink</name>
    <name type="synonym">Mustela vison</name>
    <dbReference type="NCBI Taxonomy" id="452646"/>
</organismHost>
<name>NS1A_MASV1</name>
<feature type="chain" id="PRO_0000327345" description="Non-structural polyprotein 1A">
    <location>
        <begin position="1"/>
        <end position="874"/>
    </location>
</feature>
<feature type="chain" id="PRO_0000327346" description="Protein p19" evidence="4">
    <location>
        <begin position="1"/>
        <end position="195"/>
    </location>
</feature>
<feature type="chain" id="PRO_0000327347" description="Transmembrane protein 1A" evidence="4">
    <location>
        <begin position="196"/>
        <end position="436"/>
    </location>
</feature>
<feature type="chain" id="PRO_0000327348" description="Serine protease p27" evidence="4">
    <location>
        <begin position="437"/>
        <end position="662"/>
    </location>
</feature>
<feature type="chain" id="PRO_0000419599" description="Viral genome-linked protein" evidence="4">
    <location>
        <begin position="666"/>
        <end position="752"/>
    </location>
</feature>
<feature type="chain" id="PRO_0000327349" description="Protein p20'" evidence="4">
    <location>
        <begin position="753"/>
        <end position="874"/>
    </location>
</feature>
<feature type="transmembrane region" description="Helical" evidence="4">
    <location>
        <begin position="249"/>
        <end position="269"/>
    </location>
</feature>
<feature type="transmembrane region" description="Helical" evidence="4">
    <location>
        <begin position="279"/>
        <end position="299"/>
    </location>
</feature>
<feature type="transmembrane region" description="Helical" evidence="4">
    <location>
        <begin position="324"/>
        <end position="344"/>
    </location>
</feature>
<feature type="transmembrane region" description="Helical" evidence="4">
    <location>
        <begin position="365"/>
        <end position="385"/>
    </location>
</feature>
<feature type="region of interest" description="Disordered" evidence="5">
    <location>
        <begin position="855"/>
        <end position="874"/>
    </location>
</feature>
<feature type="compositionally biased region" description="Basic residues" evidence="5">
    <location>
        <begin position="857"/>
        <end position="874"/>
    </location>
</feature>
<feature type="active site" description="Charge relay system; for serine protease activity" evidence="1">
    <location>
        <position position="477"/>
    </location>
</feature>
<feature type="active site" description="Charge relay system; for serine protease activity" evidence="1">
    <location>
        <position position="506"/>
    </location>
</feature>
<feature type="active site" description="Charge relay system; for serine protease activity" evidence="1">
    <location>
        <position position="569"/>
    </location>
</feature>
<feature type="site" description="Cleavage" evidence="4">
    <location>
        <begin position="195"/>
        <end position="196"/>
    </location>
</feature>
<feature type="site" description="Cleavage" evidence="4">
    <location>
        <begin position="436"/>
        <end position="437"/>
    </location>
</feature>
<feature type="site" description="Cleavage" evidence="4">
    <location>
        <begin position="662"/>
        <end position="663"/>
    </location>
</feature>
<feature type="site" description="Cleavage" evidence="2">
    <location>
        <begin position="665"/>
        <end position="666"/>
    </location>
</feature>
<feature type="site" description="Cleavage" evidence="4">
    <location>
        <begin position="752"/>
        <end position="753"/>
    </location>
</feature>
<feature type="modified residue" description="O-(5'-phospho-RNA)-tyrosine" evidence="3">
    <location>
        <position position="694"/>
    </location>
</feature>
<accession>Q80KJ8</accession>
<dbReference type="EC" id="3.4.21.-" evidence="2"/>
<dbReference type="EMBL" id="AY179509">
    <property type="protein sequence ID" value="AAO32081.1"/>
    <property type="molecule type" value="Genomic_RNA"/>
</dbReference>
<dbReference type="RefSeq" id="NP_795334.1">
    <molecule id="Q80KJ8-1"/>
    <property type="nucleotide sequence ID" value="NC_004579.1"/>
</dbReference>
<dbReference type="SMR" id="Q80KJ8"/>
<dbReference type="KEGG" id="vg:1482922"/>
<dbReference type="OrthoDB" id="507at10239"/>
<dbReference type="Proteomes" id="UP000007773">
    <property type="component" value="Genome"/>
</dbReference>
<dbReference type="GO" id="GO:0033644">
    <property type="term" value="C:host cell membrane"/>
    <property type="evidence" value="ECO:0007669"/>
    <property type="project" value="UniProtKB-SubCell"/>
</dbReference>
<dbReference type="GO" id="GO:0016020">
    <property type="term" value="C:membrane"/>
    <property type="evidence" value="ECO:0007669"/>
    <property type="project" value="UniProtKB-KW"/>
</dbReference>
<dbReference type="GO" id="GO:0034062">
    <property type="term" value="F:5'-3' RNA polymerase activity"/>
    <property type="evidence" value="ECO:0007669"/>
    <property type="project" value="RHEA"/>
</dbReference>
<dbReference type="GO" id="GO:0008236">
    <property type="term" value="F:serine-type peptidase activity"/>
    <property type="evidence" value="ECO:0007669"/>
    <property type="project" value="UniProtKB-KW"/>
</dbReference>
<dbReference type="GO" id="GO:0006508">
    <property type="term" value="P:proteolysis"/>
    <property type="evidence" value="ECO:0007669"/>
    <property type="project" value="UniProtKB-KW"/>
</dbReference>
<dbReference type="GO" id="GO:0075523">
    <property type="term" value="P:viral translational frameshifting"/>
    <property type="evidence" value="ECO:0007669"/>
    <property type="project" value="UniProtKB-KW"/>
</dbReference>
<dbReference type="Gene3D" id="2.40.10.10">
    <property type="entry name" value="Trypsin-like serine proteases"/>
    <property type="match status" value="2"/>
</dbReference>
<dbReference type="InterPro" id="IPR045835">
    <property type="entry name" value="Astro_1A"/>
</dbReference>
<dbReference type="InterPro" id="IPR009003">
    <property type="entry name" value="Peptidase_S1_PA"/>
</dbReference>
<dbReference type="InterPro" id="IPR043504">
    <property type="entry name" value="Peptidase_S1_PA_chymotrypsin"/>
</dbReference>
<dbReference type="Pfam" id="PF19415">
    <property type="entry name" value="Astro_1A"/>
    <property type="match status" value="1"/>
</dbReference>
<dbReference type="Pfam" id="PF13365">
    <property type="entry name" value="Trypsin_2"/>
    <property type="match status" value="1"/>
</dbReference>
<dbReference type="SUPFAM" id="SSF50494">
    <property type="entry name" value="Trypsin-like serine proteases"/>
    <property type="match status" value="1"/>
</dbReference>
<reference key="1">
    <citation type="journal article" date="2003" name="J. Gen. Virol.">
        <title>Molecular characterization of a novel astrovirus associated with disease in mink.</title>
        <authorList>
            <person name="Mittelholzer C."/>
            <person name="Hedlund K.O."/>
            <person name="Englund L."/>
            <person name="Dietz H.H."/>
            <person name="Svensson L."/>
        </authorList>
    </citation>
    <scope>NUCLEOTIDE SEQUENCE [GENOMIC RNA]</scope>
</reference>